<evidence type="ECO:0000255" key="1">
    <source>
        <dbReference type="HAMAP-Rule" id="MF_02004"/>
    </source>
</evidence>
<reference key="1">
    <citation type="journal article" date="2004" name="J. Bacteriol.">
        <title>The genome sequence of Mycoplasma hyopneumoniae strain 232, the agent of swine mycoplasmosis.</title>
        <authorList>
            <person name="Minion F.C."/>
            <person name="Lefkowitz E.J."/>
            <person name="Madsen M.L."/>
            <person name="Cleary B.J."/>
            <person name="Swartzell S.M."/>
            <person name="Mahairas G.G."/>
        </authorList>
    </citation>
    <scope>NUCLEOTIDE SEQUENCE [LARGE SCALE GENOMIC DNA]</scope>
    <source>
        <strain>232</strain>
    </source>
</reference>
<dbReference type="EC" id="6.1.1.9" evidence="1"/>
<dbReference type="EMBL" id="AE017332">
    <property type="protein sequence ID" value="AAV27679.1"/>
    <property type="molecule type" value="Genomic_DNA"/>
</dbReference>
<dbReference type="RefSeq" id="WP_011206524.1">
    <property type="nucleotide sequence ID" value="NC_006360.1"/>
</dbReference>
<dbReference type="SMR" id="Q5ZZL4"/>
<dbReference type="KEGG" id="mhy:mhp694"/>
<dbReference type="eggNOG" id="COG0525">
    <property type="taxonomic scope" value="Bacteria"/>
</dbReference>
<dbReference type="HOGENOM" id="CLU_001493_0_2_14"/>
<dbReference type="PhylomeDB" id="Q5ZZL4"/>
<dbReference type="Proteomes" id="UP000006822">
    <property type="component" value="Chromosome"/>
</dbReference>
<dbReference type="GO" id="GO:0005829">
    <property type="term" value="C:cytosol"/>
    <property type="evidence" value="ECO:0007669"/>
    <property type="project" value="TreeGrafter"/>
</dbReference>
<dbReference type="GO" id="GO:0002161">
    <property type="term" value="F:aminoacyl-tRNA deacylase activity"/>
    <property type="evidence" value="ECO:0007669"/>
    <property type="project" value="InterPro"/>
</dbReference>
<dbReference type="GO" id="GO:0005524">
    <property type="term" value="F:ATP binding"/>
    <property type="evidence" value="ECO:0007669"/>
    <property type="project" value="UniProtKB-UniRule"/>
</dbReference>
<dbReference type="GO" id="GO:0004832">
    <property type="term" value="F:valine-tRNA ligase activity"/>
    <property type="evidence" value="ECO:0007669"/>
    <property type="project" value="UniProtKB-UniRule"/>
</dbReference>
<dbReference type="GO" id="GO:0006438">
    <property type="term" value="P:valyl-tRNA aminoacylation"/>
    <property type="evidence" value="ECO:0007669"/>
    <property type="project" value="UniProtKB-UniRule"/>
</dbReference>
<dbReference type="CDD" id="cd07962">
    <property type="entry name" value="Anticodon_Ia_Val"/>
    <property type="match status" value="1"/>
</dbReference>
<dbReference type="CDD" id="cd00817">
    <property type="entry name" value="ValRS_core"/>
    <property type="match status" value="1"/>
</dbReference>
<dbReference type="Gene3D" id="3.40.50.620">
    <property type="entry name" value="HUPs"/>
    <property type="match status" value="2"/>
</dbReference>
<dbReference type="Gene3D" id="1.10.730.10">
    <property type="entry name" value="Isoleucyl-tRNA Synthetase, Domain 1"/>
    <property type="match status" value="1"/>
</dbReference>
<dbReference type="Gene3D" id="1.10.287.380">
    <property type="entry name" value="Valyl-tRNA synthetase, C-terminal domain"/>
    <property type="match status" value="1"/>
</dbReference>
<dbReference type="HAMAP" id="MF_02004">
    <property type="entry name" value="Val_tRNA_synth_type1"/>
    <property type="match status" value="1"/>
</dbReference>
<dbReference type="InterPro" id="IPR001412">
    <property type="entry name" value="aa-tRNA-synth_I_CS"/>
</dbReference>
<dbReference type="InterPro" id="IPR002300">
    <property type="entry name" value="aa-tRNA-synth_Ia"/>
</dbReference>
<dbReference type="InterPro" id="IPR033705">
    <property type="entry name" value="Anticodon_Ia_Val"/>
</dbReference>
<dbReference type="InterPro" id="IPR013155">
    <property type="entry name" value="M/V/L/I-tRNA-synth_anticd-bd"/>
</dbReference>
<dbReference type="InterPro" id="IPR014729">
    <property type="entry name" value="Rossmann-like_a/b/a_fold"/>
</dbReference>
<dbReference type="InterPro" id="IPR010978">
    <property type="entry name" value="tRNA-bd_arm"/>
</dbReference>
<dbReference type="InterPro" id="IPR009080">
    <property type="entry name" value="tRNAsynth_Ia_anticodon-bd"/>
</dbReference>
<dbReference type="InterPro" id="IPR037118">
    <property type="entry name" value="Val-tRNA_synth_C_sf"/>
</dbReference>
<dbReference type="InterPro" id="IPR009008">
    <property type="entry name" value="Val/Leu/Ile-tRNA-synth_edit"/>
</dbReference>
<dbReference type="InterPro" id="IPR002303">
    <property type="entry name" value="Valyl-tRNA_ligase"/>
</dbReference>
<dbReference type="NCBIfam" id="NF004349">
    <property type="entry name" value="PRK05729.1"/>
    <property type="match status" value="1"/>
</dbReference>
<dbReference type="NCBIfam" id="TIGR00422">
    <property type="entry name" value="valS"/>
    <property type="match status" value="1"/>
</dbReference>
<dbReference type="PANTHER" id="PTHR11946:SF93">
    <property type="entry name" value="VALINE--TRNA LIGASE, CHLOROPLASTIC_MITOCHONDRIAL 2"/>
    <property type="match status" value="1"/>
</dbReference>
<dbReference type="PANTHER" id="PTHR11946">
    <property type="entry name" value="VALYL-TRNA SYNTHETASES"/>
    <property type="match status" value="1"/>
</dbReference>
<dbReference type="Pfam" id="PF08264">
    <property type="entry name" value="Anticodon_1"/>
    <property type="match status" value="1"/>
</dbReference>
<dbReference type="Pfam" id="PF00133">
    <property type="entry name" value="tRNA-synt_1"/>
    <property type="match status" value="2"/>
</dbReference>
<dbReference type="PRINTS" id="PR00986">
    <property type="entry name" value="TRNASYNTHVAL"/>
</dbReference>
<dbReference type="SUPFAM" id="SSF47323">
    <property type="entry name" value="Anticodon-binding domain of a subclass of class I aminoacyl-tRNA synthetases"/>
    <property type="match status" value="1"/>
</dbReference>
<dbReference type="SUPFAM" id="SSF52374">
    <property type="entry name" value="Nucleotidylyl transferase"/>
    <property type="match status" value="1"/>
</dbReference>
<dbReference type="SUPFAM" id="SSF46589">
    <property type="entry name" value="tRNA-binding arm"/>
    <property type="match status" value="1"/>
</dbReference>
<dbReference type="SUPFAM" id="SSF50677">
    <property type="entry name" value="ValRS/IleRS/LeuRS editing domain"/>
    <property type="match status" value="1"/>
</dbReference>
<dbReference type="PROSITE" id="PS00178">
    <property type="entry name" value="AA_TRNA_LIGASE_I"/>
    <property type="match status" value="1"/>
</dbReference>
<name>SYV_MESH2</name>
<feature type="chain" id="PRO_0000224508" description="Valine--tRNA ligase">
    <location>
        <begin position="1"/>
        <end position="822"/>
    </location>
</feature>
<feature type="coiled-coil region" evidence="1">
    <location>
        <begin position="765"/>
        <end position="822"/>
    </location>
</feature>
<feature type="short sequence motif" description="'HIGH' region">
    <location>
        <begin position="41"/>
        <end position="51"/>
    </location>
</feature>
<feature type="short sequence motif" description="'KMSKS' region">
    <location>
        <begin position="511"/>
        <end position="515"/>
    </location>
</feature>
<feature type="binding site" evidence="1">
    <location>
        <position position="514"/>
    </location>
    <ligand>
        <name>ATP</name>
        <dbReference type="ChEBI" id="CHEBI:30616"/>
    </ligand>
</feature>
<proteinExistence type="inferred from homology"/>
<accession>Q5ZZL4</accession>
<gene>
    <name evidence="1" type="primary">valS</name>
    <name type="ordered locus">mhp694</name>
</gene>
<keyword id="KW-0030">Aminoacyl-tRNA synthetase</keyword>
<keyword id="KW-0067">ATP-binding</keyword>
<keyword id="KW-0175">Coiled coil</keyword>
<keyword id="KW-0963">Cytoplasm</keyword>
<keyword id="KW-0436">Ligase</keyword>
<keyword id="KW-0547">Nucleotide-binding</keyword>
<keyword id="KW-0648">Protein biosynthesis</keyword>
<comment type="function">
    <text evidence="1">Catalyzes the attachment of valine to tRNA(Val). As ValRS can inadvertently accommodate and process structurally similar amino acids such as threonine, to avoid such errors, it has a 'posttransfer' editing activity that hydrolyzes mischarged Thr-tRNA(Val) in a tRNA-dependent manner.</text>
</comment>
<comment type="catalytic activity">
    <reaction evidence="1">
        <text>tRNA(Val) + L-valine + ATP = L-valyl-tRNA(Val) + AMP + diphosphate</text>
        <dbReference type="Rhea" id="RHEA:10704"/>
        <dbReference type="Rhea" id="RHEA-COMP:9672"/>
        <dbReference type="Rhea" id="RHEA-COMP:9708"/>
        <dbReference type="ChEBI" id="CHEBI:30616"/>
        <dbReference type="ChEBI" id="CHEBI:33019"/>
        <dbReference type="ChEBI" id="CHEBI:57762"/>
        <dbReference type="ChEBI" id="CHEBI:78442"/>
        <dbReference type="ChEBI" id="CHEBI:78537"/>
        <dbReference type="ChEBI" id="CHEBI:456215"/>
        <dbReference type="EC" id="6.1.1.9"/>
    </reaction>
</comment>
<comment type="subunit">
    <text evidence="1">Monomer.</text>
</comment>
<comment type="subcellular location">
    <subcellularLocation>
        <location evidence="1">Cytoplasm</location>
    </subcellularLocation>
</comment>
<comment type="domain">
    <text evidence="1">ValRS has two distinct active sites: one for aminoacylation and one for editing. The misactivated threonine is translocated from the active site to the editing site.</text>
</comment>
<comment type="domain">
    <text evidence="1">The C-terminal coiled-coil domain is crucial for aminoacylation activity.</text>
</comment>
<comment type="similarity">
    <text evidence="1">Belongs to the class-I aminoacyl-tRNA synthetase family. ValS type 1 subfamily.</text>
</comment>
<sequence length="822" mass="97252">MKNKYDFKLVEEKRNEKWQKKGFFIAPKQTKKPFSIISPPPNVTGQLHLGHSWNAFIQDSLVRYHKLQGFDVLLLPSVDHAGIATQVKVEEDLAKKGIKKSDLKREEFIKKCYHWKEKQYLKIKEQWDKLGICYDFSKERFTLDQDAQIAVSDFFIKLWEKNLIYRGQKAINWDIKLQTAISNIEVINKPVEQKMYYLKYFLENSNEFLTVATTRIETISSDVALAINPKDKRYLHLVGKKVVHPLTKKLIKIIADSNVGSDFGSGIMKVSAHSILDFEIMEKHNLESKDCIDNYGNLNHEVPEFQGQNRFFARDLIAKKLEKEGFLAKIETVISNVGFSQRSDEIVEILKKPQWFVKMDELAKSLISHLNSKDKIKFYPKNFEKNLRKWFEKIHDWTISRQLWWGHRIPVWYKNDEFKVQIDSPGQGWIQDEDVLDTWFSSGISVFAFLGWPQNFDLIKSYFPTSLLVTGWDILFFWVARMYFSSLFIMKQKPFEKVLLHGLIRDEIGRKMSKSLGNGLDPMEIIEKYGSDTLRQALIFNSSPGKDIKFNIEKLNTAWNLNNKIWNIAKYIADLDTFFAKPDLIDLWMENKIYILKRQIVKNIKKYNFSVIGTEINNFIYGDFSSRYIELIKTRKNGFYARKLLRKVLIILHPFLPFLTDFLMEKIFKMEILEQKMPRIRQFKENQKVENILEIIDNLRTYREKFQISKKIILEYCIINDKFSNAEIDIINKLTFGKWLENKELVIKTKNFEIAIKVPEELKKEQKGRELKEIQFLKSEILRAEKILTNKGFLEKAPREKIDLERTKLEKLKEKLAFYEKK</sequence>
<protein>
    <recommendedName>
        <fullName evidence="1">Valine--tRNA ligase</fullName>
        <ecNumber evidence="1">6.1.1.9</ecNumber>
    </recommendedName>
    <alternativeName>
        <fullName evidence="1">Valyl-tRNA synthetase</fullName>
        <shortName evidence="1">ValRS</shortName>
    </alternativeName>
</protein>
<organism>
    <name type="scientific">Mesomycoplasma hyopneumoniae (strain 232)</name>
    <name type="common">Mycoplasma hyopneumoniae</name>
    <dbReference type="NCBI Taxonomy" id="295358"/>
    <lineage>
        <taxon>Bacteria</taxon>
        <taxon>Bacillati</taxon>
        <taxon>Mycoplasmatota</taxon>
        <taxon>Mycoplasmoidales</taxon>
        <taxon>Metamycoplasmataceae</taxon>
        <taxon>Mesomycoplasma</taxon>
    </lineage>
</organism>